<protein>
    <recommendedName>
        <fullName>Replication-associated protein</fullName>
        <shortName>Rep</shortName>
        <ecNumber>2.7.7.-</ecNumber>
        <ecNumber>3.1.21.-</ecNumber>
    </recommendedName>
    <alternativeName>
        <fullName>Protein C1</fullName>
    </alternativeName>
</protein>
<evidence type="ECO:0000250" key="1"/>
<evidence type="ECO:0000255" key="2"/>
<evidence type="ECO:0000255" key="3">
    <source>
        <dbReference type="PROSITE-ProRule" id="PRU01364"/>
    </source>
</evidence>
<evidence type="ECO:0000256" key="4">
    <source>
        <dbReference type="SAM" id="MobiDB-lite"/>
    </source>
</evidence>
<evidence type="ECO:0000269" key="5">
    <source>
    </source>
</evidence>
<evidence type="ECO:0000305" key="6"/>
<organismHost>
    <name type="scientific">Cynanchum acutum</name>
    <dbReference type="NCBI Taxonomy" id="185024"/>
</organismHost>
<organismHost>
    <name type="scientific">Malva parviflora</name>
    <name type="common">Little mallow</name>
    <name type="synonym">Cheeseweed mallow</name>
    <dbReference type="NCBI Taxonomy" id="145753"/>
</organismHost>
<organismHost>
    <name type="scientific">Solanum lycopersicum</name>
    <name type="common">Tomato</name>
    <name type="synonym">Lycopersicon esculentum</name>
    <dbReference type="NCBI Taxonomy" id="4081"/>
</organismHost>
<accession>P36279</accession>
<proteinExistence type="evidence at protein level"/>
<feature type="chain" id="PRO_0000222217" description="Replication-associated protein">
    <location>
        <begin position="1"/>
        <end position="362"/>
    </location>
</feature>
<feature type="domain" description="CRESS-DNA virus Rep endonuclease" evidence="3">
    <location>
        <begin position="8"/>
        <end position="116"/>
    </location>
</feature>
<feature type="region of interest" description="Binding to RBR1" evidence="1">
    <location>
        <begin position="143"/>
        <end position="153"/>
    </location>
</feature>
<feature type="region of interest" description="Oligomerization" evidence="1">
    <location>
        <begin position="156"/>
        <end position="176"/>
    </location>
</feature>
<feature type="region of interest" description="Disordered" evidence="4">
    <location>
        <begin position="341"/>
        <end position="362"/>
    </location>
</feature>
<feature type="short sequence motif" description="RCR-1" evidence="3">
    <location>
        <begin position="15"/>
        <end position="18"/>
    </location>
</feature>
<feature type="short sequence motif" description="RCR-2" evidence="3">
    <location>
        <begin position="57"/>
        <end position="59"/>
    </location>
</feature>
<feature type="short sequence motif" description="RCR-3" evidence="3">
    <location>
        <begin position="103"/>
        <end position="106"/>
    </location>
</feature>
<feature type="compositionally biased region" description="Acidic residues" evidence="4">
    <location>
        <begin position="352"/>
        <end position="362"/>
    </location>
</feature>
<feature type="active site" description="For DNA cleavage activity" evidence="3">
    <location>
        <position position="103"/>
    </location>
</feature>
<feature type="binding site" evidence="3">
    <location>
        <position position="49"/>
    </location>
    <ligand>
        <name>a divalent metal cation</name>
        <dbReference type="ChEBI" id="CHEBI:60240"/>
    </ligand>
</feature>
<feature type="binding site" evidence="3">
    <location>
        <position position="57"/>
    </location>
    <ligand>
        <name>a divalent metal cation</name>
        <dbReference type="ChEBI" id="CHEBI:60240"/>
    </ligand>
</feature>
<feature type="binding site" evidence="3">
    <location>
        <position position="59"/>
    </location>
    <ligand>
        <name>a divalent metal cation</name>
        <dbReference type="ChEBI" id="CHEBI:60240"/>
    </ligand>
</feature>
<feature type="binding site" evidence="3">
    <location>
        <position position="107"/>
    </location>
    <ligand>
        <name>a divalent metal cation</name>
        <dbReference type="ChEBI" id="CHEBI:60240"/>
    </ligand>
</feature>
<feature type="binding site" evidence="2">
    <location>
        <begin position="221"/>
        <end position="228"/>
    </location>
    <ligand>
        <name>ATP</name>
        <dbReference type="ChEBI" id="CHEBI:30616"/>
    </ligand>
</feature>
<sequence>MTRPKSFRINAKNYFLTYPKCSLTKEEALSQLNNLETPTSKKYIKVCRELHENGEPHLHVLIQFEGKFQCKNQRFFDLVSPTRSAHFHPNIQGAKSSSDVKSYLEKDGDTLEWGEFQIDGRSARGGQQSANDAYAQALNTGSKSEALNVLRELAPKDYVLQFHNLNSNLDRIFTPPLEVYVSPFLSSSFDRVPEELEEWVAENVKDAAARPLRPISIVIEGESRTGKTVWARSLGPHNYLCGHLDLSPKVYSNDAWYNVIDDVDPHYLKHFKEFMGAQRDWQSNTKYGKPVQIKGGIPTIFLCNPGPNSSYKEYLDEEKNSALKAWALKNAEFITLNEPLYSGTYQGPTQNSEEEVHPEEEN</sequence>
<gene>
    <name type="ORF">C1</name>
</gene>
<reference key="1">
    <citation type="journal article" date="1993" name="J. Gen. Virol.">
        <title>Nucleotide sequence and genome organization of tomato leaf curl geminivirus.</title>
        <authorList>
            <person name="Dry I.B."/>
            <person name="Rigden J.E."/>
            <person name="Krake L.R."/>
            <person name="Mullineaux P.M."/>
            <person name="Rezaian M.A."/>
        </authorList>
    </citation>
    <scope>NUCLEOTIDE SEQUENCE</scope>
</reference>
<reference key="2">
    <citation type="journal article" date="2012" name="FASEB J.">
        <title>A novel role for RAD54: this host protein modulates geminiviral DNA replication.</title>
        <authorList>
            <person name="Kaliappan K."/>
            <person name="Choudhury N.R."/>
            <person name="Suyal G."/>
            <person name="Mukherjee S.K."/>
        </authorList>
    </citation>
    <scope>FUNCTION</scope>
    <scope>INTERACTION WITH THE HOST RAD54 PROTEIN</scope>
</reference>
<comment type="function">
    <text evidence="5">Essential for the replication of viral ssDNA. The closed circular ssDNA genome is first converted to a superhelical dsDNA. Rep binds a specific region at the genome origin of replication. It introduces an endonucleolytic nick within the conserved sequence 5'-TAATATTAC-3' in the intergenic region of the genome present in all geminiviruses, thereby initiating the rolling circle replication (RCR). Following cleavage, binds covalently to the 5'-phosphate of DNA as a tyrosyl ester. The cleavage gives rise to a free 3'-OH that serves as a primer for the cellular DNA polymerase. The polymerase synthesizes the (+) strand DNA by rolling circle mechanism. After one round of replication, a Rep-catalyzed nucleotidyl transfer reaction releases a circular single-stranded virus genome, thereby terminating the replication. Displays origin-specific DNA cleavage, nucleotidyl transferase, ATPase and helicase activities.</text>
</comment>
<comment type="cofactor">
    <cofactor evidence="3">
        <name>Mg(2+)</name>
        <dbReference type="ChEBI" id="CHEBI:18420"/>
    </cofactor>
    <cofactor evidence="3">
        <name>Mn(2+)</name>
        <dbReference type="ChEBI" id="CHEBI:29035"/>
    </cofactor>
    <text evidence="3">Divalent metal cations, possibly Mg(2+) or Mn(2+).</text>
</comment>
<comment type="subunit">
    <text evidence="1 5">Homooligomer. Interacts with the replication enhancer protein (REn). Interacts with host retinoblastoma-related protein 1 (RBR1), and may thereby induce the transcription of host replicative enzymes even if the cell is not dividing anymore. Interacts with host PCNA. Interacts with host SCE1 protein (By similarity). Binds to host RAD54 protein to ensure geminiviral replication.</text>
</comment>
<comment type="subcellular location">
    <subcellularLocation>
        <location evidence="1">Host nucleus</location>
    </subcellularLocation>
</comment>
<comment type="domain">
    <text evidence="1">There are 3 rolling circle replication (RCR) motifs. RCR-2 is probably involved in metal coordination. RCR-3 is required for phosphodiester bond cleavage for initiation of RCR (By similarity).</text>
</comment>
<comment type="similarity">
    <text evidence="6">Belongs to the geminiviridae Rep protein family.</text>
</comment>
<name>REP_TLCVA</name>
<keyword id="KW-0067">ATP-binding</keyword>
<keyword id="KW-0190">Covalent protein-DNA linkage</keyword>
<keyword id="KW-0235">DNA replication</keyword>
<keyword id="KW-0238">DNA-binding</keyword>
<keyword id="KW-0255">Endonuclease</keyword>
<keyword id="KW-0347">Helicase</keyword>
<keyword id="KW-1048">Host nucleus</keyword>
<keyword id="KW-0945">Host-virus interaction</keyword>
<keyword id="KW-0378">Hydrolase</keyword>
<keyword id="KW-0479">Metal-binding</keyword>
<keyword id="KW-0511">Multifunctional enzyme</keyword>
<keyword id="KW-0540">Nuclease</keyword>
<keyword id="KW-0547">Nucleotide-binding</keyword>
<keyword id="KW-0548">Nucleotidyltransferase</keyword>
<keyword id="KW-0808">Transferase</keyword>
<dbReference type="EC" id="2.7.7.-"/>
<dbReference type="EC" id="3.1.21.-"/>
<dbReference type="PIR" id="JQ1887">
    <property type="entry name" value="JQ1887"/>
</dbReference>
<dbReference type="SMR" id="P36279"/>
<dbReference type="GO" id="GO:0042025">
    <property type="term" value="C:host cell nucleus"/>
    <property type="evidence" value="ECO:0007669"/>
    <property type="project" value="UniProtKB-SubCell"/>
</dbReference>
<dbReference type="GO" id="GO:0005524">
    <property type="term" value="F:ATP binding"/>
    <property type="evidence" value="ECO:0007669"/>
    <property type="project" value="UniProtKB-KW"/>
</dbReference>
<dbReference type="GO" id="GO:0003677">
    <property type="term" value="F:DNA binding"/>
    <property type="evidence" value="ECO:0007669"/>
    <property type="project" value="UniProtKB-KW"/>
</dbReference>
<dbReference type="GO" id="GO:0016888">
    <property type="term" value="F:endodeoxyribonuclease activity, producing 5'-phosphomonoesters"/>
    <property type="evidence" value="ECO:0007669"/>
    <property type="project" value="InterPro"/>
</dbReference>
<dbReference type="GO" id="GO:0004386">
    <property type="term" value="F:helicase activity"/>
    <property type="evidence" value="ECO:0007669"/>
    <property type="project" value="UniProtKB-KW"/>
</dbReference>
<dbReference type="GO" id="GO:0046872">
    <property type="term" value="F:metal ion binding"/>
    <property type="evidence" value="ECO:0007669"/>
    <property type="project" value="UniProtKB-KW"/>
</dbReference>
<dbReference type="GO" id="GO:0016779">
    <property type="term" value="F:nucleotidyltransferase activity"/>
    <property type="evidence" value="ECO:0007669"/>
    <property type="project" value="UniProtKB-KW"/>
</dbReference>
<dbReference type="GO" id="GO:0005198">
    <property type="term" value="F:structural molecule activity"/>
    <property type="evidence" value="ECO:0007669"/>
    <property type="project" value="InterPro"/>
</dbReference>
<dbReference type="GO" id="GO:0051701">
    <property type="term" value="P:biological process involved in interaction with host"/>
    <property type="evidence" value="ECO:0000353"/>
    <property type="project" value="UniProtKB"/>
</dbReference>
<dbReference type="GO" id="GO:0006260">
    <property type="term" value="P:DNA replication"/>
    <property type="evidence" value="ECO:0007669"/>
    <property type="project" value="UniProtKB-KW"/>
</dbReference>
<dbReference type="FunFam" id="3.40.1310.20:FF:000001">
    <property type="entry name" value="Replication-associated protein"/>
    <property type="match status" value="1"/>
</dbReference>
<dbReference type="Gene3D" id="3.40.1310.20">
    <property type="match status" value="1"/>
</dbReference>
<dbReference type="InterPro" id="IPR049912">
    <property type="entry name" value="CRESS_DNA_REP"/>
</dbReference>
<dbReference type="InterPro" id="IPR001301">
    <property type="entry name" value="Gemini_AL1_CLV"/>
</dbReference>
<dbReference type="InterPro" id="IPR001191">
    <property type="entry name" value="Gemini_AL1_REP"/>
</dbReference>
<dbReference type="InterPro" id="IPR022692">
    <property type="entry name" value="Gemini_AL1_REP_central"/>
</dbReference>
<dbReference type="Pfam" id="PF00799">
    <property type="entry name" value="Gemini_AL1"/>
    <property type="match status" value="1"/>
</dbReference>
<dbReference type="Pfam" id="PF08283">
    <property type="entry name" value="Gemini_AL1_M"/>
    <property type="match status" value="1"/>
</dbReference>
<dbReference type="PRINTS" id="PR00227">
    <property type="entry name" value="GEMCOATAL1"/>
</dbReference>
<dbReference type="PRINTS" id="PR00228">
    <property type="entry name" value="GEMCOATCLVL1"/>
</dbReference>
<dbReference type="SUPFAM" id="SSF55464">
    <property type="entry name" value="Origin of replication-binding domain, RBD-like"/>
    <property type="match status" value="1"/>
</dbReference>
<dbReference type="PROSITE" id="PS52020">
    <property type="entry name" value="CRESS_DNA_REP"/>
    <property type="match status" value="1"/>
</dbReference>
<organism>
    <name type="scientific">Tomato leaf curl virus (strain Australia)</name>
    <name type="common">ToLCV</name>
    <dbReference type="NCBI Taxonomy" id="223353"/>
    <lineage>
        <taxon>Viruses</taxon>
        <taxon>Monodnaviria</taxon>
        <taxon>Shotokuvirae</taxon>
        <taxon>Cressdnaviricota</taxon>
        <taxon>Repensiviricetes</taxon>
        <taxon>Geplafuvirales</taxon>
        <taxon>Geminiviridae</taxon>
        <taxon>Begomovirus</taxon>
        <taxon>Tomato leaf curl virus</taxon>
    </lineage>
</organism>